<feature type="chain" id="PRO_0000170354" description="C4-dicarboxylate transporter DcuA">
    <location>
        <begin position="1"/>
        <end position="433"/>
    </location>
</feature>
<feature type="transmembrane region" description="Helical" evidence="2">
    <location>
        <begin position="19"/>
        <end position="39"/>
    </location>
</feature>
<feature type="transmembrane region" description="Helical" evidence="2">
    <location>
        <begin position="50"/>
        <end position="70"/>
    </location>
</feature>
<feature type="transmembrane region" description="Helical" evidence="2">
    <location>
        <begin position="90"/>
        <end position="110"/>
    </location>
</feature>
<feature type="transmembrane region" description="Helical" evidence="2">
    <location>
        <begin position="133"/>
        <end position="153"/>
    </location>
</feature>
<feature type="transmembrane region" description="Helical" evidence="2">
    <location>
        <begin position="166"/>
        <end position="186"/>
    </location>
</feature>
<feature type="transmembrane region" description="Helical" evidence="2">
    <location>
        <begin position="225"/>
        <end position="245"/>
    </location>
</feature>
<feature type="transmembrane region" description="Helical" evidence="2">
    <location>
        <begin position="261"/>
        <end position="281"/>
    </location>
</feature>
<feature type="transmembrane region" description="Helical" evidence="2">
    <location>
        <begin position="292"/>
        <end position="312"/>
    </location>
</feature>
<feature type="transmembrane region" description="Helical" evidence="2">
    <location>
        <begin position="320"/>
        <end position="340"/>
    </location>
</feature>
<feature type="transmembrane region" description="Helical" evidence="2">
    <location>
        <begin position="368"/>
        <end position="388"/>
    </location>
</feature>
<feature type="transmembrane region" description="Helical" evidence="2">
    <location>
        <begin position="411"/>
        <end position="431"/>
    </location>
</feature>
<feature type="sequence conflict" description="In Ref. 3; CAA61502." evidence="3" ref="3">
    <original>PLSIAVVASQ</original>
    <variation>TLEYCRGRLS</variation>
    <location>
        <begin position="130"/>
        <end position="139"/>
    </location>
</feature>
<feature type="sequence conflict" description="In Ref. 3; CAA61502." evidence="3" ref="3">
    <original>ALEP</original>
    <variation>RVDR</variation>
    <location>
        <begin position="157"/>
        <end position="160"/>
    </location>
</feature>
<feature type="sequence conflict" description="In Ref. 3; CAA61502." evidence="3" ref="3">
    <original>V</original>
    <variation>L</variation>
    <location>
        <position position="232"/>
    </location>
</feature>
<feature type="sequence conflict" description="In Ref. 3; CAA61502." evidence="3" ref="3">
    <original>N</original>
    <variation>K</variation>
    <location>
        <position position="286"/>
    </location>
</feature>
<feature type="sequence conflict" description="In Ref. 3; CAA61502." evidence="3" ref="3">
    <original>GFA</original>
    <variation>ALS</variation>
    <location>
        <begin position="320"/>
        <end position="322"/>
    </location>
</feature>
<feature type="sequence conflict" description="In Ref. 3; CAA61502." evidence="3" ref="3">
    <original>T</original>
    <variation>I</variation>
    <location>
        <position position="336"/>
    </location>
</feature>
<feature type="sequence conflict" description="In Ref. 3; CAA61502." evidence="3" ref="3">
    <original>IA</original>
    <variation>MP</variation>
    <location>
        <begin position="359"/>
        <end position="360"/>
    </location>
</feature>
<feature type="sequence conflict" description="In Ref. 3; CAA61502." evidence="3" ref="3">
    <original>T</original>
    <variation>S</variation>
    <location>
        <position position="367"/>
    </location>
</feature>
<feature type="sequence conflict" description="In Ref. 3; CAA61502." evidence="3" ref="3">
    <original>A</original>
    <variation>G</variation>
    <location>
        <position position="377"/>
    </location>
</feature>
<reference key="1">
    <citation type="journal article" date="2000" name="J. Bacteriol.">
        <title>Transport of C4-dicarboxylates in Wolinella succinogenes.</title>
        <authorList>
            <person name="Ullmann R."/>
            <person name="Gross R."/>
            <person name="Simon J."/>
            <person name="Unden G."/>
            <person name="Kroeger A."/>
        </authorList>
    </citation>
    <scope>NUCLEOTIDE SEQUENCE [GENOMIC DNA]</scope>
</reference>
<reference key="2">
    <citation type="journal article" date="2003" name="Proc. Natl. Acad. Sci. U.S.A.">
        <title>Complete genome sequence and analysis of Wolinella succinogenes.</title>
        <authorList>
            <person name="Baar C."/>
            <person name="Eppinger M."/>
            <person name="Raddatz G."/>
            <person name="Simon J."/>
            <person name="Lanz C."/>
            <person name="Klimmek O."/>
            <person name="Nandakumar R."/>
            <person name="Gross R."/>
            <person name="Rosinus A."/>
            <person name="Keller H."/>
            <person name="Jagtap P."/>
            <person name="Linke B."/>
            <person name="Meyer F."/>
            <person name="Lederer H."/>
            <person name="Schuster S.C."/>
        </authorList>
    </citation>
    <scope>NUCLEOTIDE SEQUENCE [LARGE SCALE GENOMIC DNA]</scope>
    <source>
        <strain>ATCC 29543 / DSM 1740 / CCUG 13145 / JCM 31913 / LMG 7466 / NCTC 11488 / FDC 602W</strain>
    </source>
</reference>
<reference key="3">
    <citation type="journal article" date="1996" name="Eur. J. Biochem.">
        <title>Crystal structure and amino acid sequence of Wolinella succinogenes L-asparaginase.</title>
        <authorList>
            <person name="Lubkowski J."/>
            <person name="Palm G.J."/>
            <person name="Gilliland G.L."/>
            <person name="Derst C."/>
            <person name="Roehm K.H."/>
            <person name="Wlodawer A."/>
        </authorList>
    </citation>
    <scope>NUCLEOTIDE SEQUENCE [GENOMIC DNA] OF 79-433</scope>
</reference>
<sequence>MLVFEILVVLAAIFLGVRLGGIAIGYAGGLGMIVLCLGLGLKPGSIPIDVILIIMSVIAAIAAMQVAGGLDYLVHLAEKLLRSQPKHITFLAPVVTYFMTLLAGTGHTAFSTLPVIAKVAKEQGVKPSVPLSIAVVASQIAITASPVSAAVVFMSGALEPLGVGYLQLLAICIPTTFIGCMITAFICNLFNTDLSKDPVYQERVAKGMVKLRGQTQYVAKPGAKLSVLIFLVGILAVVFYATAISKNVGLIQNPIVGRDSAIMMFMLTTATLIAMFAKIDTDAVLNASTFKSGMTACICVLGVAWLGDTFVSNHINDIKGFAGGILEGHPWMLAITLFFASMLLYSQAATAKALIPAAIALSVDPVTLIASFAAVSALFVLPTYPTLLAAVQMDDTGSTRIGKFVFNHPFIVPGVLAIGISVALGFIVAPILL</sequence>
<name>DCUA_WOLSU</name>
<keyword id="KW-0997">Cell inner membrane</keyword>
<keyword id="KW-1003">Cell membrane</keyword>
<keyword id="KW-0472">Membrane</keyword>
<keyword id="KW-1185">Reference proteome</keyword>
<keyword id="KW-0812">Transmembrane</keyword>
<keyword id="KW-1133">Transmembrane helix</keyword>
<keyword id="KW-0813">Transport</keyword>
<gene>
    <name type="primary">dcuA</name>
    <name type="ordered locus">WS0661</name>
</gene>
<protein>
    <recommendedName>
        <fullName evidence="1">C4-dicarboxylate transporter DcuA</fullName>
    </recommendedName>
</protein>
<dbReference type="EMBL" id="AJ002933">
    <property type="protein sequence ID" value="CAA05765.1"/>
    <property type="molecule type" value="Genomic_DNA"/>
</dbReference>
<dbReference type="EMBL" id="BX571658">
    <property type="protein sequence ID" value="CAE09791.1"/>
    <property type="molecule type" value="Genomic_DNA"/>
</dbReference>
<dbReference type="EMBL" id="X89215">
    <property type="protein sequence ID" value="CAA61502.1"/>
    <property type="molecule type" value="Genomic_DNA"/>
</dbReference>
<dbReference type="PIR" id="S74204">
    <property type="entry name" value="S74204"/>
</dbReference>
<dbReference type="RefSeq" id="WP_011138591.1">
    <property type="nucleotide sequence ID" value="NC_005090.1"/>
</dbReference>
<dbReference type="STRING" id="273121.WS0661"/>
<dbReference type="KEGG" id="wsu:WS0661"/>
<dbReference type="eggNOG" id="COG2704">
    <property type="taxonomic scope" value="Bacteria"/>
</dbReference>
<dbReference type="HOGENOM" id="CLU_036056_1_1_7"/>
<dbReference type="Proteomes" id="UP000000422">
    <property type="component" value="Chromosome"/>
</dbReference>
<dbReference type="GO" id="GO:0005886">
    <property type="term" value="C:plasma membrane"/>
    <property type="evidence" value="ECO:0007669"/>
    <property type="project" value="UniProtKB-SubCell"/>
</dbReference>
<dbReference type="GO" id="GO:0015556">
    <property type="term" value="F:C4-dicarboxylate transmembrane transporter activity"/>
    <property type="evidence" value="ECO:0007669"/>
    <property type="project" value="InterPro"/>
</dbReference>
<dbReference type="InterPro" id="IPR004668">
    <property type="entry name" value="Anaer_Dcu_memb_transpt"/>
</dbReference>
<dbReference type="NCBIfam" id="TIGR00770">
    <property type="entry name" value="Dcu"/>
    <property type="match status" value="1"/>
</dbReference>
<dbReference type="NCBIfam" id="NF006927">
    <property type="entry name" value="PRK09412.1"/>
    <property type="match status" value="1"/>
</dbReference>
<dbReference type="NCBIfam" id="NF009136">
    <property type="entry name" value="PRK12489.1"/>
    <property type="match status" value="1"/>
</dbReference>
<dbReference type="PANTHER" id="PTHR36106">
    <property type="entry name" value="ANAEROBIC C4-DICARBOXYLATE TRANSPORTER DCUB"/>
    <property type="match status" value="1"/>
</dbReference>
<dbReference type="PANTHER" id="PTHR36106:SF2">
    <property type="entry name" value="C4-DICARBOXYLATE TRANSPORTER DCUA"/>
    <property type="match status" value="1"/>
</dbReference>
<dbReference type="Pfam" id="PF03605">
    <property type="entry name" value="DcuA_DcuB"/>
    <property type="match status" value="1"/>
</dbReference>
<dbReference type="PIRSF" id="PIRSF004539">
    <property type="entry name" value="C4-dicrbxl_trns"/>
    <property type="match status" value="1"/>
</dbReference>
<evidence type="ECO:0000250" key="1">
    <source>
        <dbReference type="UniProtKB" id="P0ABN5"/>
    </source>
</evidence>
<evidence type="ECO:0000255" key="2"/>
<evidence type="ECO:0000305" key="3"/>
<accession>O34245</accession>
<accession>Q56744</accession>
<comment type="function">
    <text evidence="1">Responsible for the transport of C4-dicarboxylates.</text>
</comment>
<comment type="subcellular location">
    <subcellularLocation>
        <location evidence="1">Cell inner membrane</location>
        <topology evidence="2">Multi-pass membrane protein</topology>
    </subcellularLocation>
</comment>
<comment type="similarity">
    <text evidence="3">Belongs to the DcuA/DcuB transporter (TC 2.A.13.1) family.</text>
</comment>
<proteinExistence type="inferred from homology"/>
<organism>
    <name type="scientific">Wolinella succinogenes (strain ATCC 29543 / DSM 1740 / CCUG 13145 / JCM 31913 / LMG 7466 / NCTC 11488 / FDC 602W)</name>
    <name type="common">Vibrio succinogenes</name>
    <dbReference type="NCBI Taxonomy" id="273121"/>
    <lineage>
        <taxon>Bacteria</taxon>
        <taxon>Pseudomonadati</taxon>
        <taxon>Campylobacterota</taxon>
        <taxon>Epsilonproteobacteria</taxon>
        <taxon>Campylobacterales</taxon>
        <taxon>Helicobacteraceae</taxon>
        <taxon>Wolinella</taxon>
    </lineage>
</organism>